<protein>
    <recommendedName>
        <fullName>Nuclear hormone receptor family member nhr-89</fullName>
    </recommendedName>
</protein>
<gene>
    <name type="primary">nhr-89</name>
    <name type="ORF">E03H4.13</name>
</gene>
<comment type="function">
    <text>Orphan nuclear receptor.</text>
</comment>
<comment type="subcellular location">
    <subcellularLocation>
        <location evidence="1">Nucleus</location>
    </subcellularLocation>
</comment>
<comment type="similarity">
    <text evidence="3">Belongs to the nuclear hormone receptor family.</text>
</comment>
<dbReference type="EMBL" id="Z81492">
    <property type="protein sequence ID" value="CAB04035.1"/>
    <property type="molecule type" value="Genomic_DNA"/>
</dbReference>
<dbReference type="EMBL" id="Z83102">
    <property type="protein sequence ID" value="CAB04035.1"/>
    <property type="status" value="JOINED"/>
    <property type="molecule type" value="Genomic_DNA"/>
</dbReference>
<dbReference type="PIR" id="T20208">
    <property type="entry name" value="T20208"/>
</dbReference>
<dbReference type="RefSeq" id="NP_493155.1">
    <property type="nucleotide sequence ID" value="NM_060754.4"/>
</dbReference>
<dbReference type="SMR" id="O02235"/>
<dbReference type="STRING" id="6239.E03H4.13.1"/>
<dbReference type="PaxDb" id="6239-E03H4.13"/>
<dbReference type="EnsemblMetazoa" id="E03H4.13.1">
    <property type="protein sequence ID" value="E03H4.13.1"/>
    <property type="gene ID" value="WBGene00003679"/>
</dbReference>
<dbReference type="GeneID" id="184026"/>
<dbReference type="KEGG" id="cel:CELE_E03H4.13"/>
<dbReference type="UCSC" id="E03H4.13">
    <property type="organism name" value="c. elegans"/>
</dbReference>
<dbReference type="AGR" id="WB:WBGene00003679"/>
<dbReference type="CTD" id="184026"/>
<dbReference type="WormBase" id="E03H4.13">
    <property type="protein sequence ID" value="CE09139"/>
    <property type="gene ID" value="WBGene00003679"/>
    <property type="gene designation" value="nhr-89"/>
</dbReference>
<dbReference type="eggNOG" id="KOG3575">
    <property type="taxonomic scope" value="Eukaryota"/>
</dbReference>
<dbReference type="GeneTree" id="ENSGT00940000153391"/>
<dbReference type="HOGENOM" id="CLU_066719_0_0_1"/>
<dbReference type="InParanoid" id="O02235"/>
<dbReference type="OrthoDB" id="5778610at2759"/>
<dbReference type="PhylomeDB" id="O02235"/>
<dbReference type="PRO" id="PR:O02235"/>
<dbReference type="Proteomes" id="UP000001940">
    <property type="component" value="Chromosome I"/>
</dbReference>
<dbReference type="GO" id="GO:0005634">
    <property type="term" value="C:nucleus"/>
    <property type="evidence" value="ECO:0007669"/>
    <property type="project" value="UniProtKB-SubCell"/>
</dbReference>
<dbReference type="GO" id="GO:0003700">
    <property type="term" value="F:DNA-binding transcription factor activity"/>
    <property type="evidence" value="ECO:0007669"/>
    <property type="project" value="InterPro"/>
</dbReference>
<dbReference type="GO" id="GO:0043565">
    <property type="term" value="F:sequence-specific DNA binding"/>
    <property type="evidence" value="ECO:0007669"/>
    <property type="project" value="InterPro"/>
</dbReference>
<dbReference type="GO" id="GO:0008270">
    <property type="term" value="F:zinc ion binding"/>
    <property type="evidence" value="ECO:0007669"/>
    <property type="project" value="UniProtKB-KW"/>
</dbReference>
<dbReference type="Gene3D" id="3.30.50.10">
    <property type="entry name" value="Erythroid Transcription Factor GATA-1, subunit A"/>
    <property type="match status" value="1"/>
</dbReference>
<dbReference type="Gene3D" id="1.10.565.10">
    <property type="entry name" value="Retinoid X Receptor"/>
    <property type="match status" value="1"/>
</dbReference>
<dbReference type="InterPro" id="IPR035500">
    <property type="entry name" value="NHR-like_dom_sf"/>
</dbReference>
<dbReference type="InterPro" id="IPR000536">
    <property type="entry name" value="Nucl_hrmn_rcpt_lig-bd"/>
</dbReference>
<dbReference type="InterPro" id="IPR001628">
    <property type="entry name" value="Znf_hrmn_rcpt"/>
</dbReference>
<dbReference type="InterPro" id="IPR013088">
    <property type="entry name" value="Znf_NHR/GATA"/>
</dbReference>
<dbReference type="PANTHER" id="PTHR46397:SF3">
    <property type="entry name" value="NR LBD DOMAIN-CONTAINING PROTEIN-RELATED"/>
    <property type="match status" value="1"/>
</dbReference>
<dbReference type="PANTHER" id="PTHR46397">
    <property type="entry name" value="NUCLEAR HORMONE RECEPTOR FAMILY-RELATED"/>
    <property type="match status" value="1"/>
</dbReference>
<dbReference type="Pfam" id="PF00105">
    <property type="entry name" value="zf-C4"/>
    <property type="match status" value="1"/>
</dbReference>
<dbReference type="SMART" id="SM00430">
    <property type="entry name" value="HOLI"/>
    <property type="match status" value="1"/>
</dbReference>
<dbReference type="SMART" id="SM00399">
    <property type="entry name" value="ZnF_C4"/>
    <property type="match status" value="1"/>
</dbReference>
<dbReference type="SUPFAM" id="SSF57716">
    <property type="entry name" value="Glucocorticoid receptor-like (DNA-binding domain)"/>
    <property type="match status" value="1"/>
</dbReference>
<dbReference type="SUPFAM" id="SSF48508">
    <property type="entry name" value="Nuclear receptor ligand-binding domain"/>
    <property type="match status" value="1"/>
</dbReference>
<dbReference type="PROSITE" id="PS51843">
    <property type="entry name" value="NR_LBD"/>
    <property type="match status" value="1"/>
</dbReference>
<dbReference type="PROSITE" id="PS00031">
    <property type="entry name" value="NUCLEAR_REC_DBD_1"/>
    <property type="match status" value="1"/>
</dbReference>
<dbReference type="PROSITE" id="PS51030">
    <property type="entry name" value="NUCLEAR_REC_DBD_2"/>
    <property type="match status" value="1"/>
</dbReference>
<name>NHR89_CAEEL</name>
<organism>
    <name type="scientific">Caenorhabditis elegans</name>
    <dbReference type="NCBI Taxonomy" id="6239"/>
    <lineage>
        <taxon>Eukaryota</taxon>
        <taxon>Metazoa</taxon>
        <taxon>Ecdysozoa</taxon>
        <taxon>Nematoda</taxon>
        <taxon>Chromadorea</taxon>
        <taxon>Rhabditida</taxon>
        <taxon>Rhabditina</taxon>
        <taxon>Rhabditomorpha</taxon>
        <taxon>Rhabditoidea</taxon>
        <taxon>Rhabditidae</taxon>
        <taxon>Peloderinae</taxon>
        <taxon>Caenorhabditis</taxon>
    </lineage>
</organism>
<keyword id="KW-0238">DNA-binding</keyword>
<keyword id="KW-0479">Metal-binding</keyword>
<keyword id="KW-0539">Nucleus</keyword>
<keyword id="KW-0675">Receptor</keyword>
<keyword id="KW-1185">Reference proteome</keyword>
<keyword id="KW-0804">Transcription</keyword>
<keyword id="KW-0805">Transcription regulation</keyword>
<keyword id="KW-0862">Zinc</keyword>
<keyword id="KW-0863">Zinc-finger</keyword>
<reference key="1">
    <citation type="journal article" date="1998" name="Science">
        <title>Genome sequence of the nematode C. elegans: a platform for investigating biology.</title>
        <authorList>
            <consortium name="The C. elegans sequencing consortium"/>
        </authorList>
    </citation>
    <scope>NUCLEOTIDE SEQUENCE [LARGE SCALE GENOMIC DNA]</scope>
    <source>
        <strain>Bristol N2</strain>
    </source>
</reference>
<accession>O02235</accession>
<accession>O17752</accession>
<evidence type="ECO:0000255" key="1">
    <source>
        <dbReference type="PROSITE-ProRule" id="PRU00407"/>
    </source>
</evidence>
<evidence type="ECO:0000255" key="2">
    <source>
        <dbReference type="PROSITE-ProRule" id="PRU01189"/>
    </source>
</evidence>
<evidence type="ECO:0000305" key="3"/>
<proteinExistence type="inferred from homology"/>
<feature type="chain" id="PRO_0000053799" description="Nuclear hormone receptor family member nhr-89">
    <location>
        <begin position="1"/>
        <end position="310"/>
    </location>
</feature>
<feature type="domain" description="NR LBD" evidence="2">
    <location>
        <begin position="101"/>
        <end position="310"/>
    </location>
</feature>
<feature type="DNA-binding region" description="Nuclear receptor" evidence="1">
    <location>
        <begin position="5"/>
        <end position="79"/>
    </location>
</feature>
<feature type="zinc finger region" description="NR C4-type" evidence="1">
    <location>
        <begin position="8"/>
        <end position="29"/>
    </location>
</feature>
<feature type="zinc finger region" description="NR C4-type" evidence="1">
    <location>
        <begin position="43"/>
        <end position="67"/>
    </location>
</feature>
<sequence>MKIPEGPCRVCHSVKGTRRHFGITACMSCSSFFRRSLNCKFYCPANNSCTILDDQKQFCRSCRYNKCVQSGMRRDCVRKQSYRRQAGRKEAKSPAVSCSNKLSESYEELLNFYVKEANESIARKRQSPLKNAHQVKTSKELLEISKSEDKTSLDAVLHCYGTYILDDEDITTLIRYFKFMNTWIDSAFVYSKSTSNEELLDGNDICKFAYQIDTSIGLSLKNLNLNIFEYAALRAICIWNLKFYETSPKMKSLALEHYKGITGALRQYYENYMSDMDIAVRIGEITMQITTISDLFHDLITLHQKYQIPF</sequence>